<keyword id="KW-0066">ATP synthesis</keyword>
<keyword id="KW-0138">CF(0)</keyword>
<keyword id="KW-0150">Chloroplast</keyword>
<keyword id="KW-0375">Hydrogen ion transport</keyword>
<keyword id="KW-0406">Ion transport</keyword>
<keyword id="KW-0446">Lipid-binding</keyword>
<keyword id="KW-0472">Membrane</keyword>
<keyword id="KW-0934">Plastid</keyword>
<keyword id="KW-1185">Reference proteome</keyword>
<keyword id="KW-0793">Thylakoid</keyword>
<keyword id="KW-0812">Transmembrane</keyword>
<keyword id="KW-1133">Transmembrane helix</keyword>
<keyword id="KW-0813">Transport</keyword>
<feature type="chain" id="PRO_0000362902" description="ATP synthase subunit c, chloroplastic">
    <location>
        <begin position="1"/>
        <end position="81"/>
    </location>
</feature>
<feature type="transmembrane region" description="Helical" evidence="1">
    <location>
        <begin position="3"/>
        <end position="23"/>
    </location>
</feature>
<feature type="transmembrane region" description="Helical" evidence="1">
    <location>
        <begin position="57"/>
        <end position="77"/>
    </location>
</feature>
<feature type="site" description="Reversibly protonated during proton transport" evidence="1">
    <location>
        <position position="61"/>
    </location>
</feature>
<comment type="function">
    <text evidence="1">F(1)F(0) ATP synthase produces ATP from ADP in the presence of a proton or sodium gradient. F-type ATPases consist of two structural domains, F(1) containing the extramembraneous catalytic core and F(0) containing the membrane proton channel, linked together by a central stalk and a peripheral stalk. During catalysis, ATP synthesis in the catalytic domain of F(1) is coupled via a rotary mechanism of the central stalk subunits to proton translocation.</text>
</comment>
<comment type="function">
    <text evidence="1">Key component of the F(0) channel; it plays a direct role in translocation across the membrane. A homomeric c-ring of between 10-14 subunits forms the central stalk rotor element with the F(1) delta and epsilon subunits.</text>
</comment>
<comment type="subunit">
    <text evidence="1">F-type ATPases have 2 components, F(1) - the catalytic core - and F(0) - the membrane proton channel. F(1) has five subunits: alpha(3), beta(3), gamma(1), delta(1), epsilon(1). F(0) has four main subunits: a(1), b(1), b'(1) and c(10-14). The alpha and beta chains form an alternating ring which encloses part of the gamma chain. F(1) is attached to F(0) by a central stalk formed by the gamma and epsilon chains, while a peripheral stalk is formed by the delta, b and b' chains.</text>
</comment>
<comment type="subcellular location">
    <subcellularLocation>
        <location evidence="1">Plastid</location>
        <location evidence="1">Chloroplast thylakoid membrane</location>
        <topology evidence="1">Multi-pass membrane protein</topology>
    </subcellularLocation>
</comment>
<comment type="miscellaneous">
    <text>In plastids the F-type ATPase is also known as CF(1)CF(0).</text>
</comment>
<comment type="similarity">
    <text evidence="1">Belongs to the ATPase C chain family.</text>
</comment>
<gene>
    <name evidence="1" type="primary">atpH</name>
</gene>
<reference key="1">
    <citation type="journal article" date="2007" name="Plant Biotechnol. J.">
        <title>The complete nucleotide sequence of the coffee (Coffea arabica L.) chloroplast genome: organization and implications for biotechnology and phylogenetic relationships amongst angiosperms.</title>
        <authorList>
            <person name="Samson N."/>
            <person name="Bausher M.G."/>
            <person name="Lee S.-B."/>
            <person name="Jansen R.K."/>
            <person name="Daniell H."/>
        </authorList>
    </citation>
    <scope>NUCLEOTIDE SEQUENCE [LARGE SCALE GENOMIC DNA]</scope>
</reference>
<protein>
    <recommendedName>
        <fullName evidence="1">ATP synthase subunit c, chloroplastic</fullName>
    </recommendedName>
    <alternativeName>
        <fullName evidence="1">ATP synthase F(0) sector subunit c</fullName>
    </alternativeName>
    <alternativeName>
        <fullName evidence="1">ATPase subunit III</fullName>
    </alternativeName>
    <alternativeName>
        <fullName evidence="1">F-type ATPase subunit c</fullName>
        <shortName evidence="1">F-ATPase subunit c</shortName>
    </alternativeName>
    <alternativeName>
        <fullName evidence="1">Lipid-binding protein</fullName>
    </alternativeName>
</protein>
<name>ATPH_COFAR</name>
<organism>
    <name type="scientific">Coffea arabica</name>
    <name type="common">Arabian coffee</name>
    <dbReference type="NCBI Taxonomy" id="13443"/>
    <lineage>
        <taxon>Eukaryota</taxon>
        <taxon>Viridiplantae</taxon>
        <taxon>Streptophyta</taxon>
        <taxon>Embryophyta</taxon>
        <taxon>Tracheophyta</taxon>
        <taxon>Spermatophyta</taxon>
        <taxon>Magnoliopsida</taxon>
        <taxon>eudicotyledons</taxon>
        <taxon>Gunneridae</taxon>
        <taxon>Pentapetalae</taxon>
        <taxon>asterids</taxon>
        <taxon>lamiids</taxon>
        <taxon>Gentianales</taxon>
        <taxon>Rubiaceae</taxon>
        <taxon>Ixoroideae</taxon>
        <taxon>Gardenieae complex</taxon>
        <taxon>Bertiereae - Coffeeae clade</taxon>
        <taxon>Coffeeae</taxon>
        <taxon>Coffea</taxon>
    </lineage>
</organism>
<sequence length="81" mass="7990">MNPLISAASVIAAGLAVGLASIGPGVGQGTAAGQAVEGIARQPEAEGKIRGTLLLSLAFMEALTIYGLVVALALLFANPFV</sequence>
<dbReference type="EMBL" id="EF044213">
    <property type="protein sequence ID" value="ABJ89666.1"/>
    <property type="molecule type" value="Genomic_DNA"/>
</dbReference>
<dbReference type="RefSeq" id="YP_817469.1">
    <property type="nucleotide sequence ID" value="NC_008535.1"/>
</dbReference>
<dbReference type="SMR" id="A0A322"/>
<dbReference type="GeneID" id="4421786"/>
<dbReference type="OrthoDB" id="438052at2759"/>
<dbReference type="Proteomes" id="UP000515148">
    <property type="component" value="Chloroplast Pltd"/>
</dbReference>
<dbReference type="GO" id="GO:0009535">
    <property type="term" value="C:chloroplast thylakoid membrane"/>
    <property type="evidence" value="ECO:0007669"/>
    <property type="project" value="UniProtKB-SubCell"/>
</dbReference>
<dbReference type="GO" id="GO:0045259">
    <property type="term" value="C:proton-transporting ATP synthase complex"/>
    <property type="evidence" value="ECO:0007669"/>
    <property type="project" value="UniProtKB-KW"/>
</dbReference>
<dbReference type="GO" id="GO:0033177">
    <property type="term" value="C:proton-transporting two-sector ATPase complex, proton-transporting domain"/>
    <property type="evidence" value="ECO:0007669"/>
    <property type="project" value="InterPro"/>
</dbReference>
<dbReference type="GO" id="GO:0008289">
    <property type="term" value="F:lipid binding"/>
    <property type="evidence" value="ECO:0007669"/>
    <property type="project" value="UniProtKB-KW"/>
</dbReference>
<dbReference type="GO" id="GO:0046933">
    <property type="term" value="F:proton-transporting ATP synthase activity, rotational mechanism"/>
    <property type="evidence" value="ECO:0007669"/>
    <property type="project" value="UniProtKB-UniRule"/>
</dbReference>
<dbReference type="CDD" id="cd18183">
    <property type="entry name" value="ATP-synt_Fo_c_ATPH"/>
    <property type="match status" value="1"/>
</dbReference>
<dbReference type="FunFam" id="1.20.20.10:FF:000001">
    <property type="entry name" value="ATP synthase subunit c, chloroplastic"/>
    <property type="match status" value="1"/>
</dbReference>
<dbReference type="Gene3D" id="1.20.20.10">
    <property type="entry name" value="F1F0 ATP synthase subunit C"/>
    <property type="match status" value="1"/>
</dbReference>
<dbReference type="HAMAP" id="MF_01396">
    <property type="entry name" value="ATP_synth_c_bact"/>
    <property type="match status" value="1"/>
</dbReference>
<dbReference type="InterPro" id="IPR005953">
    <property type="entry name" value="ATP_synth_csu_bac/chlpt"/>
</dbReference>
<dbReference type="InterPro" id="IPR000454">
    <property type="entry name" value="ATP_synth_F0_csu"/>
</dbReference>
<dbReference type="InterPro" id="IPR020537">
    <property type="entry name" value="ATP_synth_F0_csu_DDCD_BS"/>
</dbReference>
<dbReference type="InterPro" id="IPR038662">
    <property type="entry name" value="ATP_synth_F0_csu_sf"/>
</dbReference>
<dbReference type="InterPro" id="IPR002379">
    <property type="entry name" value="ATPase_proteolipid_c-like_dom"/>
</dbReference>
<dbReference type="InterPro" id="IPR035921">
    <property type="entry name" value="F/V-ATP_Csub_sf"/>
</dbReference>
<dbReference type="NCBIfam" id="TIGR01260">
    <property type="entry name" value="ATP_synt_c"/>
    <property type="match status" value="1"/>
</dbReference>
<dbReference type="NCBIfam" id="NF005608">
    <property type="entry name" value="PRK07354.1"/>
    <property type="match status" value="1"/>
</dbReference>
<dbReference type="PANTHER" id="PTHR10031">
    <property type="entry name" value="ATP SYNTHASE LIPID-BINDING PROTEIN, MITOCHONDRIAL"/>
    <property type="match status" value="1"/>
</dbReference>
<dbReference type="PANTHER" id="PTHR10031:SF0">
    <property type="entry name" value="ATPASE PROTEIN 9"/>
    <property type="match status" value="1"/>
</dbReference>
<dbReference type="Pfam" id="PF00137">
    <property type="entry name" value="ATP-synt_C"/>
    <property type="match status" value="1"/>
</dbReference>
<dbReference type="PRINTS" id="PR00124">
    <property type="entry name" value="ATPASEC"/>
</dbReference>
<dbReference type="SUPFAM" id="SSF81333">
    <property type="entry name" value="F1F0 ATP synthase subunit C"/>
    <property type="match status" value="1"/>
</dbReference>
<dbReference type="PROSITE" id="PS00605">
    <property type="entry name" value="ATPASE_C"/>
    <property type="match status" value="1"/>
</dbReference>
<geneLocation type="chloroplast"/>
<evidence type="ECO:0000255" key="1">
    <source>
        <dbReference type="HAMAP-Rule" id="MF_01396"/>
    </source>
</evidence>
<accession>A0A322</accession>
<proteinExistence type="inferred from homology"/>